<keyword id="KW-0378">Hydrolase</keyword>
<keyword id="KW-0443">Lipid metabolism</keyword>
<keyword id="KW-1208">Phospholipid metabolism</keyword>
<keyword id="KW-0904">Protein phosphatase</keyword>
<keyword id="KW-1185">Reference proteome</keyword>
<gene>
    <name evidence="6" type="primary">PTEN1</name>
    <name evidence="10" type="ordered locus">At5g39400</name>
    <name evidence="11" type="ORF">MUL8.80</name>
</gene>
<organism>
    <name type="scientific">Arabidopsis thaliana</name>
    <name type="common">Mouse-ear cress</name>
    <dbReference type="NCBI Taxonomy" id="3702"/>
    <lineage>
        <taxon>Eukaryota</taxon>
        <taxon>Viridiplantae</taxon>
        <taxon>Streptophyta</taxon>
        <taxon>Embryophyta</taxon>
        <taxon>Tracheophyta</taxon>
        <taxon>Spermatophyta</taxon>
        <taxon>Magnoliopsida</taxon>
        <taxon>eudicotyledons</taxon>
        <taxon>Gunneridae</taxon>
        <taxon>Pentapetalae</taxon>
        <taxon>rosids</taxon>
        <taxon>malvids</taxon>
        <taxon>Brassicales</taxon>
        <taxon>Brassicaceae</taxon>
        <taxon>Camelineae</taxon>
        <taxon>Arabidopsis</taxon>
    </lineage>
</organism>
<evidence type="ECO:0000255" key="1">
    <source>
        <dbReference type="PROSITE-ProRule" id="PRU00589"/>
    </source>
</evidence>
<evidence type="ECO:0000255" key="2">
    <source>
        <dbReference type="PROSITE-ProRule" id="PRU00590"/>
    </source>
</evidence>
<evidence type="ECO:0000255" key="3">
    <source>
        <dbReference type="PROSITE-ProRule" id="PRU10044"/>
    </source>
</evidence>
<evidence type="ECO:0000269" key="4">
    <source>
    </source>
</evidence>
<evidence type="ECO:0000269" key="5">
    <source>
    </source>
</evidence>
<evidence type="ECO:0000303" key="6">
    <source>
    </source>
</evidence>
<evidence type="ECO:0000303" key="7">
    <source>
    </source>
</evidence>
<evidence type="ECO:0000305" key="8"/>
<evidence type="ECO:0000305" key="9">
    <source>
    </source>
</evidence>
<evidence type="ECO:0000312" key="10">
    <source>
        <dbReference type="Araport" id="AT5G39400"/>
    </source>
</evidence>
<evidence type="ECO:0000312" key="11">
    <source>
        <dbReference type="EMBL" id="BAB11013.1"/>
    </source>
</evidence>
<protein>
    <recommendedName>
        <fullName evidence="8">Phosphatidylinositol 3,4,5-trisphosphate 3-phosphatase and protein-tyrosine-phosphatase PTEN1</fullName>
        <ecNumber evidence="3 4">3.1.3.48</ecNumber>
        <ecNumber evidence="4">3.1.3.67</ecNumber>
    </recommendedName>
    <alternativeName>
        <fullName evidence="7">Protein PHOSPHATASE AND TENSIN HOMOLOG 1</fullName>
        <shortName evidence="6">AtPTEN1</shortName>
    </alternativeName>
</protein>
<name>PTEN1_ARATH</name>
<dbReference type="EC" id="3.1.3.48" evidence="3 4"/>
<dbReference type="EC" id="3.1.3.67" evidence="4"/>
<dbReference type="EMBL" id="AJ490172">
    <property type="protein sequence ID" value="CAD35363.1"/>
    <property type="molecule type" value="mRNA"/>
</dbReference>
<dbReference type="EMBL" id="AB009054">
    <property type="protein sequence ID" value="BAB11013.1"/>
    <property type="molecule type" value="Genomic_DNA"/>
</dbReference>
<dbReference type="EMBL" id="CP002688">
    <property type="protein sequence ID" value="AED94429.1"/>
    <property type="molecule type" value="Genomic_DNA"/>
</dbReference>
<dbReference type="EMBL" id="AK118115">
    <property type="protein sequence ID" value="BAC42741.1"/>
    <property type="molecule type" value="mRNA"/>
</dbReference>
<dbReference type="EMBL" id="BT005560">
    <property type="protein sequence ID" value="AAO63980.1"/>
    <property type="molecule type" value="mRNA"/>
</dbReference>
<dbReference type="RefSeq" id="NP_198756.2">
    <property type="nucleotide sequence ID" value="NM_123302.4"/>
</dbReference>
<dbReference type="SMR" id="Q9FLZ5"/>
<dbReference type="FunCoup" id="Q9FLZ5">
    <property type="interactions" value="99"/>
</dbReference>
<dbReference type="IntAct" id="Q9FLZ5">
    <property type="interactions" value="2"/>
</dbReference>
<dbReference type="STRING" id="3702.Q9FLZ5"/>
<dbReference type="PaxDb" id="3702-AT5G39400.1"/>
<dbReference type="EnsemblPlants" id="AT5G39400.1">
    <property type="protein sequence ID" value="AT5G39400.1"/>
    <property type="gene ID" value="AT5G39400"/>
</dbReference>
<dbReference type="GeneID" id="833936"/>
<dbReference type="Gramene" id="AT5G39400.1">
    <property type="protein sequence ID" value="AT5G39400.1"/>
    <property type="gene ID" value="AT5G39400"/>
</dbReference>
<dbReference type="KEGG" id="ath:AT5G39400"/>
<dbReference type="Araport" id="AT5G39400"/>
<dbReference type="TAIR" id="AT5G39400">
    <property type="gene designation" value="PTEN1"/>
</dbReference>
<dbReference type="eggNOG" id="KOG2283">
    <property type="taxonomic scope" value="Eukaryota"/>
</dbReference>
<dbReference type="HOGENOM" id="CLU_020105_5_0_1"/>
<dbReference type="InParanoid" id="Q9FLZ5"/>
<dbReference type="OMA" id="QKTCLDY"/>
<dbReference type="PhylomeDB" id="Q9FLZ5"/>
<dbReference type="BioCyc" id="ARA:AT5G39400-MONOMER"/>
<dbReference type="PRO" id="PR:Q9FLZ5"/>
<dbReference type="Proteomes" id="UP000006548">
    <property type="component" value="Chromosome 5"/>
</dbReference>
<dbReference type="ExpressionAtlas" id="Q9FLZ5">
    <property type="expression patterns" value="baseline and differential"/>
</dbReference>
<dbReference type="GO" id="GO:0016791">
    <property type="term" value="F:phosphatase activity"/>
    <property type="evidence" value="ECO:0000314"/>
    <property type="project" value="TAIR"/>
</dbReference>
<dbReference type="GO" id="GO:0052866">
    <property type="term" value="F:phosphatidylinositol phosphate phosphatase activity"/>
    <property type="evidence" value="ECO:0000314"/>
    <property type="project" value="UniProtKB"/>
</dbReference>
<dbReference type="GO" id="GO:0016314">
    <property type="term" value="F:phosphatidylinositol-3,4,5-trisphosphate 3-phosphatase activity"/>
    <property type="evidence" value="ECO:0007669"/>
    <property type="project" value="UniProtKB-EC"/>
</dbReference>
<dbReference type="GO" id="GO:0004725">
    <property type="term" value="F:protein tyrosine phosphatase activity"/>
    <property type="evidence" value="ECO:0000314"/>
    <property type="project" value="UniProtKB"/>
</dbReference>
<dbReference type="GO" id="GO:0046856">
    <property type="term" value="P:phosphatidylinositol dephosphorylation"/>
    <property type="evidence" value="ECO:0000314"/>
    <property type="project" value="UniProtKB"/>
</dbReference>
<dbReference type="GO" id="GO:0009555">
    <property type="term" value="P:pollen development"/>
    <property type="evidence" value="ECO:0000315"/>
    <property type="project" value="TAIR"/>
</dbReference>
<dbReference type="CDD" id="cd14509">
    <property type="entry name" value="PTP_PTEN"/>
    <property type="match status" value="1"/>
</dbReference>
<dbReference type="FunFam" id="3.90.190.10:FF:000029">
    <property type="entry name" value="Phosphatidylinositol 3,4,5-trisphosphate 3-phosphatase and dual-specificity protein phosphatase PTEN"/>
    <property type="match status" value="1"/>
</dbReference>
<dbReference type="FunFam" id="2.60.40.1110:FF:000007">
    <property type="entry name" value="Phosphatidylinositol 3,4,5-trisphosphate 3-phosphatase and protein-tyrosine-phosphatase PTEN1"/>
    <property type="match status" value="1"/>
</dbReference>
<dbReference type="Gene3D" id="2.60.40.1110">
    <property type="match status" value="1"/>
</dbReference>
<dbReference type="Gene3D" id="3.90.190.10">
    <property type="entry name" value="Protein tyrosine phosphatase superfamily"/>
    <property type="match status" value="1"/>
</dbReference>
<dbReference type="InterPro" id="IPR035892">
    <property type="entry name" value="C2_domain_sf"/>
</dbReference>
<dbReference type="InterPro" id="IPR051281">
    <property type="entry name" value="Dual-spec_lipid-protein_phosph"/>
</dbReference>
<dbReference type="InterPro" id="IPR029021">
    <property type="entry name" value="Prot-tyrosine_phosphatase-like"/>
</dbReference>
<dbReference type="InterPro" id="IPR045101">
    <property type="entry name" value="PTP_PTEN"/>
</dbReference>
<dbReference type="InterPro" id="IPR014020">
    <property type="entry name" value="Tensin_C2-dom"/>
</dbReference>
<dbReference type="InterPro" id="IPR029023">
    <property type="entry name" value="Tensin_phosphatase"/>
</dbReference>
<dbReference type="InterPro" id="IPR016130">
    <property type="entry name" value="Tyr_Pase_AS"/>
</dbReference>
<dbReference type="InterPro" id="IPR000387">
    <property type="entry name" value="Tyr_Pase_dom"/>
</dbReference>
<dbReference type="PANTHER" id="PTHR12305">
    <property type="entry name" value="PHOSPHATASE WITH HOMOLOGY TO TENSIN"/>
    <property type="match status" value="1"/>
</dbReference>
<dbReference type="PANTHER" id="PTHR12305:SF60">
    <property type="entry name" value="PHOSPHATIDYLINOSITOL 3,4,5-TRISPHOSPHATE 3-PHOSPHATASE TPTE2-RELATED"/>
    <property type="match status" value="1"/>
</dbReference>
<dbReference type="Pfam" id="PF10409">
    <property type="entry name" value="PTEN_C2"/>
    <property type="match status" value="1"/>
</dbReference>
<dbReference type="Pfam" id="PF22785">
    <property type="entry name" value="Tc-R-P"/>
    <property type="match status" value="1"/>
</dbReference>
<dbReference type="SMART" id="SM01326">
    <property type="entry name" value="PTEN_C2"/>
    <property type="match status" value="1"/>
</dbReference>
<dbReference type="SUPFAM" id="SSF52799">
    <property type="entry name" value="(Phosphotyrosine protein) phosphatases II"/>
    <property type="match status" value="1"/>
</dbReference>
<dbReference type="SUPFAM" id="SSF49562">
    <property type="entry name" value="C2 domain (Calcium/lipid-binding domain, CaLB)"/>
    <property type="match status" value="1"/>
</dbReference>
<dbReference type="PROSITE" id="PS51182">
    <property type="entry name" value="C2_TENSIN"/>
    <property type="match status" value="1"/>
</dbReference>
<dbReference type="PROSITE" id="PS51181">
    <property type="entry name" value="PPASE_TENSIN"/>
    <property type="match status" value="1"/>
</dbReference>
<dbReference type="PROSITE" id="PS00383">
    <property type="entry name" value="TYR_PHOSPHATASE_1"/>
    <property type="match status" value="1"/>
</dbReference>
<dbReference type="PROSITE" id="PS50056">
    <property type="entry name" value="TYR_PHOSPHATASE_2"/>
    <property type="match status" value="1"/>
</dbReference>
<accession>Q9FLZ5</accession>
<reference key="1">
    <citation type="journal article" date="2002" name="Plant Cell">
        <title>A tumor suppressor homolog, AtPTEN1, is essential for pollen development in Arabidopsis.</title>
        <authorList>
            <person name="Gupta R."/>
            <person name="Ting J.T.L."/>
            <person name="Sokolov L.N."/>
            <person name="Johnson S.A."/>
            <person name="Luan S."/>
        </authorList>
    </citation>
    <scope>NUCLEOTIDE SEQUENCE [MRNA]</scope>
    <scope>FUNCTION</scope>
    <scope>MUTAGENESIS OF CYS-152</scope>
    <scope>DISRUPTION PHENOTYPE</scope>
    <scope>CATALYTIC ACTIVITY</scope>
    <scope>TISSUE SPECIFICITY</scope>
    <scope>ACTIVITY REGULATION</scope>
    <source>
        <strain>cv. Columbia</strain>
    </source>
</reference>
<reference key="2">
    <citation type="journal article" date="1998" name="DNA Res.">
        <title>Structural analysis of Arabidopsis thaliana chromosome 5. IV. Sequence features of the regions of 1,456,315 bp covered by nineteen physically assigned P1 and TAC clones.</title>
        <authorList>
            <person name="Sato S."/>
            <person name="Kaneko T."/>
            <person name="Kotani H."/>
            <person name="Nakamura Y."/>
            <person name="Asamizu E."/>
            <person name="Miyajima N."/>
            <person name="Tabata S."/>
        </authorList>
    </citation>
    <scope>NUCLEOTIDE SEQUENCE [LARGE SCALE GENOMIC DNA]</scope>
    <source>
        <strain>cv. Columbia</strain>
    </source>
</reference>
<reference key="3">
    <citation type="journal article" date="2017" name="Plant J.">
        <title>Araport11: a complete reannotation of the Arabidopsis thaliana reference genome.</title>
        <authorList>
            <person name="Cheng C.Y."/>
            <person name="Krishnakumar V."/>
            <person name="Chan A.P."/>
            <person name="Thibaud-Nissen F."/>
            <person name="Schobel S."/>
            <person name="Town C.D."/>
        </authorList>
    </citation>
    <scope>GENOME REANNOTATION</scope>
    <source>
        <strain>cv. Columbia</strain>
    </source>
</reference>
<reference key="4">
    <citation type="journal article" date="2002" name="Science">
        <title>Functional annotation of a full-length Arabidopsis cDNA collection.</title>
        <authorList>
            <person name="Seki M."/>
            <person name="Narusaka M."/>
            <person name="Kamiya A."/>
            <person name="Ishida J."/>
            <person name="Satou M."/>
            <person name="Sakurai T."/>
            <person name="Nakajima M."/>
            <person name="Enju A."/>
            <person name="Akiyama K."/>
            <person name="Oono Y."/>
            <person name="Muramatsu M."/>
            <person name="Hayashizaki Y."/>
            <person name="Kawai J."/>
            <person name="Carninci P."/>
            <person name="Itoh M."/>
            <person name="Ishii Y."/>
            <person name="Arakawa T."/>
            <person name="Shibata K."/>
            <person name="Shinagawa A."/>
            <person name="Shinozaki K."/>
        </authorList>
    </citation>
    <scope>NUCLEOTIDE SEQUENCE [LARGE SCALE MRNA]</scope>
    <source>
        <strain>cv. Columbia</strain>
    </source>
</reference>
<reference key="5">
    <citation type="journal article" date="2003" name="Science">
        <title>Empirical analysis of transcriptional activity in the Arabidopsis genome.</title>
        <authorList>
            <person name="Yamada K."/>
            <person name="Lim J."/>
            <person name="Dale J.M."/>
            <person name="Chen H."/>
            <person name="Shinn P."/>
            <person name="Palm C.J."/>
            <person name="Southwick A.M."/>
            <person name="Wu H.C."/>
            <person name="Kim C.J."/>
            <person name="Nguyen M."/>
            <person name="Pham P.K."/>
            <person name="Cheuk R.F."/>
            <person name="Karlin-Newmann G."/>
            <person name="Liu S.X."/>
            <person name="Lam B."/>
            <person name="Sakano H."/>
            <person name="Wu T."/>
            <person name="Yu G."/>
            <person name="Miranda M."/>
            <person name="Quach H.L."/>
            <person name="Tripp M."/>
            <person name="Chang C.H."/>
            <person name="Lee J.M."/>
            <person name="Toriumi M.J."/>
            <person name="Chan M.M."/>
            <person name="Tang C.C."/>
            <person name="Onodera C.S."/>
            <person name="Deng J.M."/>
            <person name="Akiyama K."/>
            <person name="Ansari Y."/>
            <person name="Arakawa T."/>
            <person name="Banh J."/>
            <person name="Banno F."/>
            <person name="Bowser L."/>
            <person name="Brooks S.Y."/>
            <person name="Carninci P."/>
            <person name="Chao Q."/>
            <person name="Choy N."/>
            <person name="Enju A."/>
            <person name="Goldsmith A.D."/>
            <person name="Gurjal M."/>
            <person name="Hansen N.F."/>
            <person name="Hayashizaki Y."/>
            <person name="Johnson-Hopson C."/>
            <person name="Hsuan V.W."/>
            <person name="Iida K."/>
            <person name="Karnes M."/>
            <person name="Khan S."/>
            <person name="Koesema E."/>
            <person name="Ishida J."/>
            <person name="Jiang P.X."/>
            <person name="Jones T."/>
            <person name="Kawai J."/>
            <person name="Kamiya A."/>
            <person name="Meyers C."/>
            <person name="Nakajima M."/>
            <person name="Narusaka M."/>
            <person name="Seki M."/>
            <person name="Sakurai T."/>
            <person name="Satou M."/>
            <person name="Tamse R."/>
            <person name="Vaysberg M."/>
            <person name="Wallender E.K."/>
            <person name="Wong C."/>
            <person name="Yamamura Y."/>
            <person name="Yuan S."/>
            <person name="Shinozaki K."/>
            <person name="Davis R.W."/>
            <person name="Theologis A."/>
            <person name="Ecker J.R."/>
        </authorList>
    </citation>
    <scope>NUCLEOTIDE SEQUENCE [LARGE SCALE MRNA]</scope>
    <source>
        <strain>cv. Columbia</strain>
    </source>
</reference>
<reference key="6">
    <citation type="journal article" date="2012" name="Biochem. J.">
        <title>A novel class of PTEN protein in Arabidopsis displays unusual phosphoinositide phosphatase activity and efficiently binds phosphatidic acid.</title>
        <authorList>
            <person name="Pribat A."/>
            <person name="Sormani R."/>
            <person name="Rousseau-Gueutin M."/>
            <person name="Julkowska M.M."/>
            <person name="Testerink C."/>
            <person name="Joubes J."/>
            <person name="Castroviejo M."/>
            <person name="Laguerre M."/>
            <person name="Meyer C."/>
            <person name="Germain V."/>
            <person name="Rothan C."/>
        </authorList>
    </citation>
    <scope>FUNCTION</scope>
    <scope>TISSUE SPECIFICITY</scope>
    <scope>GENE FAMILY</scope>
    <scope>ACTIVE SITE</scope>
    <scope>NOMENCLATURE</scope>
</reference>
<sequence>MGLKLSRGPVKEKSPLEFTRVHILTYFTTNSYLRNLVSKKRRRLIIGGYDLDMSYISDKLLAMSFPAERMRAVYRNPLWQVKSVLDMRHPDHYKVYNLCIEESYDPDNFYGRVERFPFDDNHVPSLKMIQLFCESVHSWLSLDPKNIAVVHCMAGKGRTGLMVSAYLVYGGMSAEEALEMYASRRTTNNNGVSIPSQRRYVKYWSDLLSFSKKGPPEVKLPQEHSRELLRIRLYDTANVDSVFFVVSELQEVPNEMYRPSVELARGCCRQFKKGYCRSSSPRYYISHVNCDSEEDEEVTDGEEPHLVVQMDTESSIIDEKTCLDFYFDKPVRVSGDIRITFYQKMIGSRLFYTCFNTAFITNGLLQFSIGELDKVGGNGRSISGPDFSLELLFGPACSKFGKFLSRDDLSLS</sequence>
<proteinExistence type="evidence at protein level"/>
<feature type="chain" id="PRO_0000435167" description="Phosphatidylinositol 3,4,5-trisphosphate 3-phosphatase and protein-tyrosine-phosphatase PTEN1">
    <location>
        <begin position="1"/>
        <end position="412"/>
    </location>
</feature>
<feature type="domain" description="Phosphatase tensin-type" evidence="2">
    <location>
        <begin position="42"/>
        <end position="211"/>
    </location>
</feature>
<feature type="domain" description="C2 tensin-type" evidence="1">
    <location>
        <begin position="239"/>
        <end position="396"/>
    </location>
</feature>
<feature type="active site" description="Phosphocysteine intermediate" evidence="2">
    <location>
        <position position="152"/>
    </location>
</feature>
<feature type="mutagenesis site" description="Loss of phosphatase activity." evidence="4">
    <original>C</original>
    <variation>S</variation>
    <location>
        <position position="152"/>
    </location>
</feature>
<comment type="function">
    <text evidence="4">Protein tyrosine phosphatase that also exhibits lipid phosphatase activity. Can use phosphatidylinositol substrates such as PtdIns(3,4,5)P(3) as substrate. Pollen-specific phosphatase required for pollen development.</text>
</comment>
<comment type="catalytic activity">
    <reaction evidence="3 4">
        <text>O-phospho-L-tyrosyl-[protein] + H2O = L-tyrosyl-[protein] + phosphate</text>
        <dbReference type="Rhea" id="RHEA:10684"/>
        <dbReference type="Rhea" id="RHEA-COMP:10136"/>
        <dbReference type="Rhea" id="RHEA-COMP:20101"/>
        <dbReference type="ChEBI" id="CHEBI:15377"/>
        <dbReference type="ChEBI" id="CHEBI:43474"/>
        <dbReference type="ChEBI" id="CHEBI:46858"/>
        <dbReference type="ChEBI" id="CHEBI:61978"/>
        <dbReference type="EC" id="3.1.3.48"/>
    </reaction>
</comment>
<comment type="catalytic activity">
    <reaction evidence="4">
        <text>a 1,2-diacyl-sn-glycero-3-phospho-(1D-myo-inositol-3,4,5-trisphosphate) + H2O = a 1,2-diacyl-sn-glycero-3-phospho-(1D-myo-inositol-4,5-bisphosphate) + phosphate</text>
        <dbReference type="Rhea" id="RHEA:25017"/>
        <dbReference type="ChEBI" id="CHEBI:15377"/>
        <dbReference type="ChEBI" id="CHEBI:43474"/>
        <dbReference type="ChEBI" id="CHEBI:57836"/>
        <dbReference type="ChEBI" id="CHEBI:58456"/>
        <dbReference type="EC" id="3.1.3.67"/>
    </reaction>
</comment>
<comment type="activity regulation">
    <text evidence="4">Inhibited by vanadate.</text>
</comment>
<comment type="tissue specificity">
    <text evidence="4 5">Expressed exclusively in pollen grains during the late stage of development (at protein level).</text>
</comment>
<comment type="disruption phenotype">
    <text evidence="4">Pollen cell death after mitosis, during the late stage of development, characterized by collapsed pollen grains, shrunken, with highly deformed exines and reduced size.</text>
</comment>
<comment type="similarity">
    <text evidence="9">Belongs to the PTEN phosphatase protein family.</text>
</comment>